<reference key="1">
    <citation type="journal article" date="1988" name="Virology">
        <title>Canine host range and a specific epitope map along with variant sequences in the capsid protein gene of canine parvovirus and related feline, mink, and raccoon parvoviruses.</title>
        <authorList>
            <person name="Parrish C.R."/>
            <person name="Aquadro C.F."/>
            <person name="Carmichael L.E."/>
        </authorList>
    </citation>
    <scope>NUCLEOTIDE SEQUENCE [GENOMIC DNA]</scope>
</reference>
<reference key="2">
    <citation type="journal article" date="1994" name="J. Gen. Virol.">
        <title>Mapping of determinants of the host range for canine cells in the genome of canine parvovirus using canine parvovirus/mink enteritis virus chimeric viruses.</title>
        <authorList>
            <person name="Horiuchi M."/>
            <person name="Goto H."/>
            <person name="Ishiguro N."/>
            <person name="Shinagawa M."/>
        </authorList>
    </citation>
    <scope>NUCLEOTIDE SEQUENCE [GENOMIC DNA] OF 234-727</scope>
    <source>
        <strain>Y1</strain>
    </source>
</reference>
<reference key="3">
    <citation type="journal article" date="2002" name="J. Virol.">
        <title>The VP1 N-terminal sequence of canine parvovirus affects nuclear transport of capsids and efficient cell infection.</title>
        <authorList>
            <person name="Vihinen-Ranta M."/>
            <person name="Wang D."/>
            <person name="Weichert W.S."/>
            <person name="Parrish C.R."/>
        </authorList>
    </citation>
    <scope>FUNCTION</scope>
    <scope>NUCLEAR LOCALIZATION SIGNAL</scope>
</reference>
<reference key="4">
    <citation type="journal article" date="2003" name="J. Virol.">
        <title>Exploitation of microtubule cytoskeleton and dynein during parvoviral traffic toward the nucleus.</title>
        <authorList>
            <person name="Suikkanen S."/>
            <person name="Aaltonen T."/>
            <person name="Nevalainen M."/>
            <person name="Valilehto O."/>
            <person name="Lindholm L."/>
            <person name="Vuento M."/>
            <person name="Vihinen-Ranta M."/>
        </authorList>
    </citation>
    <scope>FUNCTION</scope>
</reference>
<reference key="5">
    <citation type="journal article" date="2009" name="J. Virol.">
        <title>Early steps in cell infection by parvoviruses: host-specific differences in cell receptor binding but similar endosomal trafficking.</title>
        <authorList>
            <person name="Harbison C.E."/>
            <person name="Lyi S.M."/>
            <person name="Weichert W.S."/>
            <person name="Parrish C.R."/>
        </authorList>
    </citation>
    <scope>FUNCTION</scope>
    <scope>INTERACTION WITH CANINE TFRC</scope>
</reference>
<reference key="6">
    <citation type="journal article" date="1991" name="Science">
        <title>The three-dimensional structure of canine parvovirus and its functional implications.</title>
        <authorList>
            <person name="Tsao J."/>
            <person name="Chapman M.S."/>
            <person name="Agbandje M."/>
            <person name="Keller W."/>
            <person name="Smith K."/>
            <person name="Wu H."/>
            <person name="Luo M."/>
            <person name="Smith T.J."/>
            <person name="Rossmann M.G."/>
            <person name="Compans R.W."/>
            <person name="Parish C.R."/>
        </authorList>
    </citation>
    <scope>X-RAY CRYSTALLOGRAPHY (3.25 ANGSTROMS)</scope>
</reference>
<reference key="7">
    <citation type="journal article" date="1996" name="Virology">
        <title>Structural analysis of a mutation in canine parvovirus which controls antigenicity and host range.</title>
        <authorList>
            <person name="Llamas-Saiz A.L."/>
            <person name="Agbandje-McKenna M."/>
            <person name="Parker J.S."/>
            <person name="Wahid A.T."/>
            <person name="Parrish C.R."/>
            <person name="Rossmann M.G."/>
        </authorList>
    </citation>
    <scope>X-RAY CRYSTALLOGRAPHY (3.25 ANGSTROMS) OF 1-584</scope>
</reference>
<reference key="8">
    <citation type="journal article" date="1996" name="J. Mol. Biol.">
        <title>Canine parvovirus capsid structure, analyzed at 2.9 A resolution.</title>
        <authorList>
            <person name="Xie Q."/>
            <person name="Chapman M.S."/>
        </authorList>
    </citation>
    <scope>X-RAY CRYSTALLOGRAPHY (2.9 ANGSTROMS) OF 154-737</scope>
</reference>
<reference key="9">
    <citation type="journal article" date="2000" name="J. Mol. Biol.">
        <title>Host range and variability of calcium binding by surface loops in the capsids of canine and feline parvoviruses.</title>
        <authorList>
            <person name="Simpson A.A."/>
            <person name="Chandrasekar V."/>
            <person name="Hebert B."/>
            <person name="Sullivan G.M."/>
            <person name="Rossmann M.G."/>
            <person name="Parrish C.R."/>
        </authorList>
    </citation>
    <scope>X-RAY CRYSTALLOGRAPHY (3.5 ANGSTROMS)</scope>
</reference>
<reference key="10">
    <citation type="journal article" date="2003" name="J. Virol.">
        <title>Structures of host range-controlling regions of the capsids of canine and feline parvoviruses and mutants.</title>
        <authorList>
            <person name="Govindasamy L."/>
            <person name="Hueffer K."/>
            <person name="Parrish C.R."/>
            <person name="Agbandje-McKenna M."/>
        </authorList>
    </citation>
    <scope>X-RAY CRYSTALLOGRAPHY (3.3 ANGSTROMS) OF 37-737</scope>
</reference>
<protein>
    <recommendedName>
        <fullName>Capsid protein VP1</fullName>
    </recommendedName>
    <alternativeName>
        <fullName>Coat protein VP1</fullName>
    </alternativeName>
</protein>
<proteinExistence type="evidence at protein level"/>
<keyword id="KW-0002">3D-structure</keyword>
<keyword id="KW-0025">Alternative splicing</keyword>
<keyword id="KW-0167">Capsid protein</keyword>
<keyword id="KW-1165">Clathrin-mediated endocytosis of virus by host</keyword>
<keyword id="KW-1176">Cytoplasmic inwards viral transport</keyword>
<keyword id="KW-1015">Disulfide bond</keyword>
<keyword id="KW-1048">Host nucleus</keyword>
<keyword id="KW-0945">Host-virus interaction</keyword>
<keyword id="KW-0460">Magnesium</keyword>
<keyword id="KW-0479">Metal-binding</keyword>
<keyword id="KW-1177">Microtubular inwards viral transport</keyword>
<keyword id="KW-1140">T=1 icosahedral capsid protein</keyword>
<keyword id="KW-1233">Viral attachment to host adhesion receptor</keyword>
<keyword id="KW-1161">Viral attachment to host cell</keyword>
<keyword id="KW-1234">Viral attachment to host entry receptor</keyword>
<keyword id="KW-1162">Viral penetration into host cytoplasm</keyword>
<keyword id="KW-1163">Viral penetration into host nucleus</keyword>
<keyword id="KW-1173">Viral penetration via permeabilization of host membrane</keyword>
<keyword id="KW-0946">Virion</keyword>
<keyword id="KW-1164">Virus endocytosis by host</keyword>
<keyword id="KW-1160">Virus entry into host cell</keyword>
<accession>P17455</accession>
<accession>P30129</accession>
<accession>Q6LDR5</accession>
<accession>Q84389</accession>
<name>CAPSD_PAVCD</name>
<organism>
    <name type="scientific">Canine parvovirustype 2 (isolate Dog/United States/CPV-d/1988)</name>
    <name type="common">CPV-2</name>
    <dbReference type="NCBI Taxonomy" id="10790"/>
    <lineage>
        <taxon>Viruses</taxon>
        <taxon>Monodnaviria</taxon>
        <taxon>Shotokuvirae</taxon>
        <taxon>Cossaviricota</taxon>
        <taxon>Quintoviricetes</taxon>
        <taxon>Piccovirales</taxon>
        <taxon>Parvoviridae</taxon>
        <taxon>Parvovirinae</taxon>
        <taxon>Protoparvovirus</taxon>
        <taxon>Protoparvovirus carnivoran1</taxon>
    </lineage>
</organism>
<sequence length="727" mass="80343">MAPPAKRARRGLVPPGYKYLGPGNSLDQGEPTNPSDAAAKEHDEAYAAYLRSGKNPYLYFSPADQRFIDQTKDAKDWGGKIGHYFFRAKKAIAPVLTDTPDHPSTSRPTKPTKRSKPPPHIFINLAKKKKAGAGQVKRDNLAPMSDGAVQPDGGQPAVRNERATGSGNGSGGGGGGGSGGVGISTGTFNNQTEFKFLENGWVEITANSSRLVHLNMPESENYRRVVVNNMDKTAVNGNMALDDIHAQIVTPWSLVDANAWGVWFNPGDWQLIVNTMSELHLVSFEQEIFNVVLKTVSESATQPPTKVYNNDLTASLMVALDSNNTMPFTPAAMRSETLGFYPWKPTIPTPWRYYFQWDRTLIPSHTGTSGTPTNIYHGTDPDDVQFYTIENSVPVHLLRTGDEFATGTFFFDCKPCRLTHTWQTNRALGLPPFLNSLPQSEGATNFGDIGVQQDKRRGVTQMGNTNYITEATIMRPAEVGYSAPYYSFEASTQGPFKTPIAAGRGGAQTDENQAADGNPRYAFGRQHGQKTTTTGETPERFTYIAHQDTGRYPEGDWIQNINFNLPVTNDNVLLPTDPIGGKTGINYTNIFNTYGPLTALNNVPPVYPNGQIWDKEFDTDLKPRLHVNAPFVCQNNCPGQLFVKVAPNLTNEYDPDASANMSRIVTYSDFWWKGKLVFKAKLRASHTWNPIQQMSINVDNQFNYVPSNIGGMKIVYEKSQLAPRKLY</sequence>
<dbReference type="EMBL" id="M23255">
    <property type="protein sequence ID" value="AAA47158.1"/>
    <property type="status" value="ALT_SEQ"/>
    <property type="molecule type" value="Genomic_DNA"/>
</dbReference>
<dbReference type="EMBL" id="M23255">
    <property type="protein sequence ID" value="AAA47159.1"/>
    <property type="molecule type" value="Genomic_DNA"/>
</dbReference>
<dbReference type="EMBL" id="D26081">
    <property type="protein sequence ID" value="BAA05075.1"/>
    <property type="molecule type" value="Genomic_DNA"/>
</dbReference>
<dbReference type="PIR" id="A31163">
    <property type="entry name" value="VCPVCD"/>
</dbReference>
<dbReference type="PDB" id="1C8D">
    <property type="method" value="X-ray"/>
    <property type="resolution" value="3.00 A"/>
    <property type="chains" value="A=144-727"/>
</dbReference>
<dbReference type="PDB" id="1C8H">
    <property type="method" value="X-ray"/>
    <property type="resolution" value="3.50 A"/>
    <property type="chains" value="A=144-727"/>
</dbReference>
<dbReference type="PDB" id="1IJS">
    <property type="method" value="X-ray"/>
    <property type="resolution" value="3.25 A"/>
    <property type="chains" value="P=144-727"/>
</dbReference>
<dbReference type="PDB" id="1P5W">
    <property type="method" value="X-ray"/>
    <property type="resolution" value="3.30 A"/>
    <property type="chains" value="A=180-727"/>
</dbReference>
<dbReference type="PDB" id="1P5Y">
    <property type="method" value="X-ray"/>
    <property type="resolution" value="3.20 A"/>
    <property type="chains" value="A=180-727"/>
</dbReference>
<dbReference type="PDB" id="4DPV">
    <property type="method" value="X-ray"/>
    <property type="resolution" value="2.90 A"/>
    <property type="chains" value="Z=144-727"/>
</dbReference>
<dbReference type="PDB" id="7M3M">
    <property type="method" value="EM"/>
    <property type="resolution" value="2.26 A"/>
    <property type="chains" value="A=144-727"/>
</dbReference>
<dbReference type="PDB" id="7M3N">
    <property type="method" value="EM"/>
    <property type="resolution" value="2.40 A"/>
    <property type="chains" value="A=144-727"/>
</dbReference>
<dbReference type="PDB" id="7M3O">
    <property type="method" value="EM"/>
    <property type="resolution" value="2.40 A"/>
    <property type="chains" value="A=144-727"/>
</dbReference>
<dbReference type="PDBsum" id="1C8D"/>
<dbReference type="PDBsum" id="1C8H"/>
<dbReference type="PDBsum" id="1IJS"/>
<dbReference type="PDBsum" id="1P5W"/>
<dbReference type="PDBsum" id="1P5Y"/>
<dbReference type="PDBsum" id="4DPV"/>
<dbReference type="PDBsum" id="7M3M"/>
<dbReference type="PDBsum" id="7M3N"/>
<dbReference type="PDBsum" id="7M3O"/>
<dbReference type="SMR" id="P17455"/>
<dbReference type="ABCD" id="P17455">
    <property type="antibodies" value="9 sequenced antibodies"/>
</dbReference>
<dbReference type="EvolutionaryTrace" id="P17455"/>
<dbReference type="GO" id="GO:0043657">
    <property type="term" value="C:host cell"/>
    <property type="evidence" value="ECO:0007669"/>
    <property type="project" value="GOC"/>
</dbReference>
<dbReference type="GO" id="GO:0042025">
    <property type="term" value="C:host cell nucleus"/>
    <property type="evidence" value="ECO:0007669"/>
    <property type="project" value="UniProtKB-SubCell"/>
</dbReference>
<dbReference type="GO" id="GO:0039615">
    <property type="term" value="C:T=1 icosahedral viral capsid"/>
    <property type="evidence" value="ECO:0007669"/>
    <property type="project" value="UniProtKB-KW"/>
</dbReference>
<dbReference type="GO" id="GO:0046872">
    <property type="term" value="F:metal ion binding"/>
    <property type="evidence" value="ECO:0007669"/>
    <property type="project" value="UniProtKB-KW"/>
</dbReference>
<dbReference type="GO" id="GO:0005198">
    <property type="term" value="F:structural molecule activity"/>
    <property type="evidence" value="ECO:0007669"/>
    <property type="project" value="InterPro"/>
</dbReference>
<dbReference type="GO" id="GO:0098671">
    <property type="term" value="P:adhesion receptor-mediated virion attachment to host cell"/>
    <property type="evidence" value="ECO:0007669"/>
    <property type="project" value="UniProtKB-KW"/>
</dbReference>
<dbReference type="GO" id="GO:0075512">
    <property type="term" value="P:clathrin-dependent endocytosis of virus by host cell"/>
    <property type="evidence" value="ECO:0007669"/>
    <property type="project" value="UniProtKB-KW"/>
</dbReference>
<dbReference type="GO" id="GO:0098670">
    <property type="term" value="P:entry receptor-mediated virion attachment to host cell"/>
    <property type="evidence" value="ECO:0007669"/>
    <property type="project" value="UniProtKB-KW"/>
</dbReference>
<dbReference type="GO" id="GO:0075521">
    <property type="term" value="P:microtubule-dependent intracellular transport of viral material towards nucleus"/>
    <property type="evidence" value="ECO:0007669"/>
    <property type="project" value="UniProtKB-KW"/>
</dbReference>
<dbReference type="GO" id="GO:0140267">
    <property type="term" value="P:symbiont entry into host cell via permeabilization of host membrane"/>
    <property type="evidence" value="ECO:0007669"/>
    <property type="project" value="UniProtKB-KW"/>
</dbReference>
<dbReference type="GO" id="GO:0075732">
    <property type="term" value="P:viral penetration into host nucleus"/>
    <property type="evidence" value="ECO:0007669"/>
    <property type="project" value="UniProtKB-KW"/>
</dbReference>
<dbReference type="Gene3D" id="2.170.30.10">
    <property type="entry name" value="Parvovirus coat protein VP1/VP2"/>
    <property type="match status" value="1"/>
</dbReference>
<dbReference type="InterPro" id="IPR016184">
    <property type="entry name" value="Capsid/spike_ssDNA_virus"/>
</dbReference>
<dbReference type="InterPro" id="IPR001403">
    <property type="entry name" value="Parvovirus_coat"/>
</dbReference>
<dbReference type="InterPro" id="IPR013607">
    <property type="entry name" value="Phospholipase_A2-like"/>
</dbReference>
<dbReference type="InterPro" id="IPR036952">
    <property type="entry name" value="VP1/VP2"/>
</dbReference>
<dbReference type="Pfam" id="PF00740">
    <property type="entry name" value="Parvo_coat"/>
    <property type="match status" value="1"/>
</dbReference>
<dbReference type="Pfam" id="PF08398">
    <property type="entry name" value="Phospholip_A2_4"/>
    <property type="match status" value="1"/>
</dbReference>
<dbReference type="SUPFAM" id="SSF88645">
    <property type="entry name" value="ssDNA viruses"/>
    <property type="match status" value="1"/>
</dbReference>
<comment type="function">
    <text evidence="1 4 5 6">Capsid protein self-assembles to form an icosahedral capsid with a T=1 symmetry, about 22 nm in diameter, and consisting of 60 copies of two size variants of the capsid proteins, VP1 and VP2, which differ by the presence of an N-terminal extension in the minor protein VP1. The capsid encapsulates the genomic ssDNA. Capsid proteins are responsible for the attachment to host cell receptor TFRC. This attachment induces virion internalization predominantly through clathrin-endocytosis. Binding to the host receptors also induces capsid rearrangements leading to surface exposure of VP1 N-terminus, specifically its phospholipase A2-like region and nuclear localization signal(s). VP1 N-terminus might serve as a lipolytic enzyme to breach the endosomal membrane during entry into host cell (By similarity). Intracytoplasmic transport involves microtubules and interaction between capsid proteins and host dynein. Exposure of nuclear localization signal probably allows nuclear import of capsids.</text>
</comment>
<comment type="subunit">
    <text evidence="1">Interacts with host TFRC.</text>
</comment>
<comment type="subcellular location">
    <subcellularLocation>
        <location>Virion</location>
    </subcellularLocation>
    <subcellularLocation>
        <location evidence="7">Host nucleus</location>
    </subcellularLocation>
</comment>
<comment type="alternative products">
    <event type="alternative splicing"/>
    <isoform>
        <id>P17455-1</id>
        <name>VP1</name>
        <sequence type="displayed"/>
    </isoform>
    <isoform>
        <id>P17455-2</id>
        <name>VP2</name>
        <sequence type="described" ref="VSP_041137"/>
    </isoform>
</comment>
<comment type="domain">
    <text>The N-terminus of VP1 is sequestered within the mature capsid. It contains a phospholipase A2-like region and nuclear localization signals that might be exposed by capsid modifications during virus entry.</text>
</comment>
<comment type="miscellaneous">
    <text>The capsids of autonomous parvoviruses expose a proportion of VP2 N-terminus and part of that sequence can be cleaved of to form VP3.</text>
</comment>
<comment type="miscellaneous">
    <molecule>Isoform VP1</molecule>
    <text>Minor splicing isoform.</text>
</comment>
<comment type="miscellaneous">
    <molecule>Isoform VP2</molecule>
    <text evidence="7">Major splicing isoform produced by deletion of the initiating AUG for VP1 and downstream translation of VP2.</text>
</comment>
<comment type="similarity">
    <text evidence="7">Belongs to the parvoviridae capsid protein family.</text>
</comment>
<comment type="sequence caution" evidence="7">
    <conflict type="erroneous gene model prediction">
        <sequence resource="EMBL-CDS" id="AAA47158"/>
    </conflict>
</comment>
<comment type="online information" name="Virus Particle ExploreR db">
    <link uri="https://viperdb.org/Info_Page.php?VDB=1p5w"/>
    <text>Icosahedral capsid structure</text>
</comment>
<comment type="online information" name="Virus Particle ExploreR db">
    <link uri="https://viperdb.org/Info_Page.php?VDB=2cas"/>
    <text>Icosahedral empty capsid structure</text>
</comment>
<comment type="online information" name="Virus Particle ExploreR db">
    <link uri="https://viperdb.org/Info_Page.php?VDB=4dpv"/>
    <text>Icosahedral capsid structure</text>
</comment>
<comment type="online information" name="Virus Particle ExploreR db">
    <link uri="https://viperdb.org/Info_Page.php?VDB=1c8h"/>
    <text>Icosahedral empty capsid structure at pH 5,5</text>
</comment>
<organismHost>
    <name type="scientific">Canis lupus familiaris</name>
    <name type="common">Dog</name>
    <name type="synonym">Canis familiaris</name>
    <dbReference type="NCBI Taxonomy" id="9615"/>
</organismHost>
<organismHost>
    <name type="scientific">Felis catus</name>
    <name type="common">Cat</name>
    <name type="synonym">Felis silvestris catus</name>
    <dbReference type="NCBI Taxonomy" id="9685"/>
</organismHost>
<evidence type="ECO:0000250" key="1"/>
<evidence type="ECO:0000255" key="2"/>
<evidence type="ECO:0000256" key="3">
    <source>
        <dbReference type="SAM" id="MobiDB-lite"/>
    </source>
</evidence>
<evidence type="ECO:0000269" key="4">
    <source>
    </source>
</evidence>
<evidence type="ECO:0000269" key="5">
    <source>
    </source>
</evidence>
<evidence type="ECO:0000269" key="6">
    <source>
    </source>
</evidence>
<evidence type="ECO:0000305" key="7"/>
<evidence type="ECO:0007829" key="8">
    <source>
        <dbReference type="PDB" id="1C8D"/>
    </source>
</evidence>
<evidence type="ECO:0007829" key="9">
    <source>
        <dbReference type="PDB" id="1IJS"/>
    </source>
</evidence>
<evidence type="ECO:0007829" key="10">
    <source>
        <dbReference type="PDB" id="1P5W"/>
    </source>
</evidence>
<evidence type="ECO:0007829" key="11">
    <source>
        <dbReference type="PDB" id="1P5Y"/>
    </source>
</evidence>
<evidence type="ECO:0007829" key="12">
    <source>
        <dbReference type="PDB" id="4DPV"/>
    </source>
</evidence>
<evidence type="ECO:0007829" key="13">
    <source>
        <dbReference type="PDB" id="7M3M"/>
    </source>
</evidence>
<evidence type="ECO:0007829" key="14">
    <source>
        <dbReference type="PDB" id="7M3N"/>
    </source>
</evidence>
<evidence type="ECO:0007829" key="15">
    <source>
        <dbReference type="PDB" id="7M3O"/>
    </source>
</evidence>
<feature type="chain" id="PRO_0000039425" description="Capsid protein VP1">
    <location>
        <begin position="1"/>
        <end position="727"/>
    </location>
</feature>
<feature type="region of interest" description="Disordered" evidence="3">
    <location>
        <begin position="1"/>
        <end position="39"/>
    </location>
</feature>
<feature type="region of interest" description="Phospholipase A2-like" evidence="1">
    <location>
        <begin position="19"/>
        <end position="64"/>
    </location>
</feature>
<feature type="region of interest" description="Disordered" evidence="3">
    <location>
        <begin position="95"/>
        <end position="120"/>
    </location>
</feature>
<feature type="region of interest" description="Disordered" evidence="3">
    <location>
        <begin position="141"/>
        <end position="184"/>
    </location>
</feature>
<feature type="short sequence motif" description="Nuclear localization signal" evidence="2">
    <location>
        <begin position="4"/>
        <end position="13"/>
    </location>
</feature>
<feature type="compositionally biased region" description="Basic residues" evidence="3">
    <location>
        <begin position="1"/>
        <end position="10"/>
    </location>
</feature>
<feature type="compositionally biased region" description="Polar residues" evidence="3">
    <location>
        <begin position="25"/>
        <end position="35"/>
    </location>
</feature>
<feature type="compositionally biased region" description="Gly residues" evidence="3">
    <location>
        <begin position="166"/>
        <end position="183"/>
    </location>
</feature>
<feature type="binding site">
    <location>
        <position position="323"/>
    </location>
    <ligand>
        <name>Mg(2+)</name>
        <dbReference type="ChEBI" id="CHEBI:18420"/>
        <label>1</label>
    </ligand>
</feature>
<feature type="disulfide bond">
    <location>
        <begin position="633"/>
        <end position="637"/>
    </location>
</feature>
<feature type="splice variant" id="VSP_041137" description="In isoform VP2." evidence="7">
    <location>
        <begin position="1"/>
        <end position="143"/>
    </location>
</feature>
<feature type="sequence variant" description="In strain: Y1.">
    <original>I</original>
    <variation>T</variation>
    <location>
        <position position="244"/>
    </location>
</feature>
<feature type="strand" evidence="13">
    <location>
        <begin position="192"/>
        <end position="196"/>
    </location>
</feature>
<feature type="turn" evidence="15">
    <location>
        <begin position="198"/>
        <end position="200"/>
    </location>
</feature>
<feature type="strand" evidence="13">
    <location>
        <begin position="201"/>
        <end position="215"/>
    </location>
</feature>
<feature type="strand" evidence="13">
    <location>
        <begin position="223"/>
        <end position="227"/>
    </location>
</feature>
<feature type="helix" evidence="13">
    <location>
        <begin position="230"/>
        <end position="233"/>
    </location>
</feature>
<feature type="strand" evidence="10">
    <location>
        <begin position="235"/>
        <end position="237"/>
    </location>
</feature>
<feature type="helix" evidence="13">
    <location>
        <begin position="239"/>
        <end position="241"/>
    </location>
</feature>
<feature type="strand" evidence="13">
    <location>
        <begin position="245"/>
        <end position="254"/>
    </location>
</feature>
<feature type="helix" evidence="13">
    <location>
        <begin position="260"/>
        <end position="262"/>
    </location>
</feature>
<feature type="helix" evidence="13">
    <location>
        <begin position="266"/>
        <end position="275"/>
    </location>
</feature>
<feature type="strand" evidence="13">
    <location>
        <begin position="276"/>
        <end position="279"/>
    </location>
</feature>
<feature type="strand" evidence="13">
    <location>
        <begin position="283"/>
        <end position="297"/>
    </location>
</feature>
<feature type="turn" evidence="8">
    <location>
        <begin position="302"/>
        <end position="304"/>
    </location>
</feature>
<feature type="strand" evidence="13">
    <location>
        <begin position="307"/>
        <end position="310"/>
    </location>
</feature>
<feature type="strand" evidence="13">
    <location>
        <begin position="316"/>
        <end position="321"/>
    </location>
</feature>
<feature type="helix" evidence="13">
    <location>
        <begin position="331"/>
        <end position="333"/>
    </location>
</feature>
<feature type="strand" evidence="13">
    <location>
        <begin position="349"/>
        <end position="355"/>
    </location>
</feature>
<feature type="strand" evidence="13">
    <location>
        <begin position="358"/>
        <end position="361"/>
    </location>
</feature>
<feature type="strand" evidence="13">
    <location>
        <begin position="374"/>
        <end position="378"/>
    </location>
</feature>
<feature type="helix" evidence="13">
    <location>
        <begin position="381"/>
        <end position="383"/>
    </location>
</feature>
<feature type="helix" evidence="13">
    <location>
        <begin position="389"/>
        <end position="392"/>
    </location>
</feature>
<feature type="strand" evidence="13">
    <location>
        <begin position="395"/>
        <end position="398"/>
    </location>
</feature>
<feature type="strand" evidence="13">
    <location>
        <begin position="404"/>
        <end position="410"/>
    </location>
</feature>
<feature type="strand" evidence="11">
    <location>
        <begin position="416"/>
        <end position="418"/>
    </location>
</feature>
<feature type="strand" evidence="14">
    <location>
        <begin position="419"/>
        <end position="421"/>
    </location>
</feature>
<feature type="helix" evidence="13">
    <location>
        <begin position="425"/>
        <end position="427"/>
    </location>
</feature>
<feature type="strand" evidence="13">
    <location>
        <begin position="442"/>
        <end position="444"/>
    </location>
</feature>
<feature type="helix" evidence="13">
    <location>
        <begin position="453"/>
        <end position="455"/>
    </location>
</feature>
<feature type="turn" evidence="13">
    <location>
        <begin position="470"/>
        <end position="472"/>
    </location>
</feature>
<feature type="strand" evidence="13">
    <location>
        <begin position="476"/>
        <end position="480"/>
    </location>
</feature>
<feature type="strand" evidence="13">
    <location>
        <begin position="488"/>
        <end position="491"/>
    </location>
</feature>
<feature type="strand" evidence="13">
    <location>
        <begin position="494"/>
        <end position="497"/>
    </location>
</feature>
<feature type="turn" evidence="12">
    <location>
        <begin position="507"/>
        <end position="512"/>
    </location>
</feature>
<feature type="helix" evidence="8">
    <location>
        <begin position="513"/>
        <end position="516"/>
    </location>
</feature>
<feature type="strand" evidence="13">
    <location>
        <begin position="520"/>
        <end position="523"/>
    </location>
</feature>
<feature type="helix" evidence="13">
    <location>
        <begin position="525"/>
        <end position="527"/>
    </location>
</feature>
<feature type="strand" evidence="13">
    <location>
        <begin position="539"/>
        <end position="542"/>
    </location>
</feature>
<feature type="helix" evidence="13">
    <location>
        <begin position="553"/>
        <end position="555"/>
    </location>
</feature>
<feature type="helix" evidence="12">
    <location>
        <begin position="569"/>
        <end position="571"/>
    </location>
</feature>
<feature type="strand" evidence="12">
    <location>
        <begin position="575"/>
        <end position="577"/>
    </location>
</feature>
<feature type="strand" evidence="9">
    <location>
        <begin position="579"/>
        <end position="581"/>
    </location>
</feature>
<feature type="strand" evidence="10">
    <location>
        <begin position="582"/>
        <end position="586"/>
    </location>
</feature>
<feature type="helix" evidence="13">
    <location>
        <begin position="587"/>
        <end position="590"/>
    </location>
</feature>
<feature type="strand" evidence="14">
    <location>
        <begin position="612"/>
        <end position="615"/>
    </location>
</feature>
<feature type="strand" evidence="13">
    <location>
        <begin position="619"/>
        <end position="621"/>
    </location>
</feature>
<feature type="strand" evidence="8">
    <location>
        <begin position="630"/>
        <end position="632"/>
    </location>
</feature>
<feature type="strand" evidence="13">
    <location>
        <begin position="633"/>
        <end position="635"/>
    </location>
</feature>
<feature type="strand" evidence="13">
    <location>
        <begin position="640"/>
        <end position="645"/>
    </location>
</feature>
<feature type="strand" evidence="12">
    <location>
        <begin position="657"/>
        <end position="659"/>
    </location>
</feature>
<feature type="strand" evidence="13">
    <location>
        <begin position="666"/>
        <end position="682"/>
    </location>
</feature>
<feature type="strand" evidence="13">
    <location>
        <begin position="687"/>
        <end position="689"/>
    </location>
</feature>
<feature type="strand" evidence="13">
    <location>
        <begin position="698"/>
        <end position="700"/>
    </location>
</feature>
<feature type="helix" evidence="13">
    <location>
        <begin position="701"/>
        <end position="703"/>
    </location>
</feature>
<feature type="strand" evidence="8">
    <location>
        <begin position="717"/>
        <end position="719"/>
    </location>
</feature>
<feature type="strand" evidence="14">
    <location>
        <begin position="722"/>
        <end position="724"/>
    </location>
</feature>